<protein>
    <recommendedName>
        <fullName evidence="1">Imidazole glycerol phosphate synthase subunit HisF</fullName>
        <ecNumber evidence="1">4.3.2.10</ecNumber>
    </recommendedName>
    <alternativeName>
        <fullName evidence="1">IGP synthase cyclase subunit</fullName>
    </alternativeName>
    <alternativeName>
        <fullName evidence="1">IGP synthase subunit HisF</fullName>
    </alternativeName>
    <alternativeName>
        <fullName evidence="1">ImGP synthase subunit HisF</fullName>
        <shortName evidence="1">IGPS subunit HisF</shortName>
    </alternativeName>
</protein>
<keyword id="KW-0028">Amino-acid biosynthesis</keyword>
<keyword id="KW-0963">Cytoplasm</keyword>
<keyword id="KW-0368">Histidine biosynthesis</keyword>
<keyword id="KW-0456">Lyase</keyword>
<keyword id="KW-1185">Reference proteome</keyword>
<feature type="chain" id="PRO_0000142240" description="Imidazole glycerol phosphate synthase subunit HisF">
    <location>
        <begin position="1"/>
        <end position="252"/>
    </location>
</feature>
<feature type="active site" evidence="1">
    <location>
        <position position="11"/>
    </location>
</feature>
<feature type="active site" evidence="1">
    <location>
        <position position="130"/>
    </location>
</feature>
<name>HIS6_STAS1</name>
<reference key="1">
    <citation type="journal article" date="2005" name="Proc. Natl. Acad. Sci. U.S.A.">
        <title>Whole genome sequence of Staphylococcus saprophyticus reveals the pathogenesis of uncomplicated urinary tract infection.</title>
        <authorList>
            <person name="Kuroda M."/>
            <person name="Yamashita A."/>
            <person name="Hirakawa H."/>
            <person name="Kumano M."/>
            <person name="Morikawa K."/>
            <person name="Higashide M."/>
            <person name="Maruyama A."/>
            <person name="Inose Y."/>
            <person name="Matoba K."/>
            <person name="Toh H."/>
            <person name="Kuhara S."/>
            <person name="Hattori M."/>
            <person name="Ohta T."/>
        </authorList>
    </citation>
    <scope>NUCLEOTIDE SEQUENCE [LARGE SCALE GENOMIC DNA]</scope>
    <source>
        <strain>ATCC 15305 / DSM 20229 / NCIMB 8711 / NCTC 7292 / S-41</strain>
    </source>
</reference>
<evidence type="ECO:0000255" key="1">
    <source>
        <dbReference type="HAMAP-Rule" id="MF_01013"/>
    </source>
</evidence>
<organism>
    <name type="scientific">Staphylococcus saprophyticus subsp. saprophyticus (strain ATCC 15305 / DSM 20229 / NCIMB 8711 / NCTC 7292 / S-41)</name>
    <dbReference type="NCBI Taxonomy" id="342451"/>
    <lineage>
        <taxon>Bacteria</taxon>
        <taxon>Bacillati</taxon>
        <taxon>Bacillota</taxon>
        <taxon>Bacilli</taxon>
        <taxon>Bacillales</taxon>
        <taxon>Staphylococcaceae</taxon>
        <taxon>Staphylococcus</taxon>
    </lineage>
</organism>
<accession>Q4A049</accession>
<proteinExistence type="inferred from homology"/>
<dbReference type="EC" id="4.3.2.10" evidence="1"/>
<dbReference type="EMBL" id="AP008934">
    <property type="protein sequence ID" value="BAE17569.1"/>
    <property type="molecule type" value="Genomic_DNA"/>
</dbReference>
<dbReference type="RefSeq" id="WP_002482383.1">
    <property type="nucleotide sequence ID" value="NZ_MTGA01000036.1"/>
</dbReference>
<dbReference type="SMR" id="Q4A049"/>
<dbReference type="GeneID" id="66866582"/>
<dbReference type="KEGG" id="ssp:SSP0424"/>
<dbReference type="eggNOG" id="COG0107">
    <property type="taxonomic scope" value="Bacteria"/>
</dbReference>
<dbReference type="HOGENOM" id="CLU_048577_4_0_9"/>
<dbReference type="OrthoDB" id="9781903at2"/>
<dbReference type="UniPathway" id="UPA00031">
    <property type="reaction ID" value="UER00010"/>
</dbReference>
<dbReference type="Proteomes" id="UP000006371">
    <property type="component" value="Chromosome"/>
</dbReference>
<dbReference type="GO" id="GO:0005737">
    <property type="term" value="C:cytoplasm"/>
    <property type="evidence" value="ECO:0007669"/>
    <property type="project" value="UniProtKB-SubCell"/>
</dbReference>
<dbReference type="GO" id="GO:0000107">
    <property type="term" value="F:imidazoleglycerol-phosphate synthase activity"/>
    <property type="evidence" value="ECO:0007669"/>
    <property type="project" value="UniProtKB-UniRule"/>
</dbReference>
<dbReference type="GO" id="GO:0016829">
    <property type="term" value="F:lyase activity"/>
    <property type="evidence" value="ECO:0007669"/>
    <property type="project" value="UniProtKB-KW"/>
</dbReference>
<dbReference type="GO" id="GO:0000105">
    <property type="term" value="P:L-histidine biosynthetic process"/>
    <property type="evidence" value="ECO:0007669"/>
    <property type="project" value="UniProtKB-UniRule"/>
</dbReference>
<dbReference type="CDD" id="cd04731">
    <property type="entry name" value="HisF"/>
    <property type="match status" value="1"/>
</dbReference>
<dbReference type="Gene3D" id="3.20.20.70">
    <property type="entry name" value="Aldolase class I"/>
    <property type="match status" value="1"/>
</dbReference>
<dbReference type="HAMAP" id="MF_01013">
    <property type="entry name" value="HisF"/>
    <property type="match status" value="1"/>
</dbReference>
<dbReference type="InterPro" id="IPR013785">
    <property type="entry name" value="Aldolase_TIM"/>
</dbReference>
<dbReference type="InterPro" id="IPR006062">
    <property type="entry name" value="His_biosynth"/>
</dbReference>
<dbReference type="InterPro" id="IPR004651">
    <property type="entry name" value="HisF"/>
</dbReference>
<dbReference type="InterPro" id="IPR050064">
    <property type="entry name" value="IGPS_HisA/HisF"/>
</dbReference>
<dbReference type="InterPro" id="IPR011060">
    <property type="entry name" value="RibuloseP-bd_barrel"/>
</dbReference>
<dbReference type="NCBIfam" id="TIGR00735">
    <property type="entry name" value="hisF"/>
    <property type="match status" value="1"/>
</dbReference>
<dbReference type="PANTHER" id="PTHR21235:SF2">
    <property type="entry name" value="IMIDAZOLE GLYCEROL PHOSPHATE SYNTHASE HISHF"/>
    <property type="match status" value="1"/>
</dbReference>
<dbReference type="PANTHER" id="PTHR21235">
    <property type="entry name" value="IMIDAZOLE GLYCEROL PHOSPHATE SYNTHASE SUBUNIT HISF/H IGP SYNTHASE SUBUNIT HISF/H"/>
    <property type="match status" value="1"/>
</dbReference>
<dbReference type="Pfam" id="PF00977">
    <property type="entry name" value="His_biosynth"/>
    <property type="match status" value="1"/>
</dbReference>
<dbReference type="SUPFAM" id="SSF51366">
    <property type="entry name" value="Ribulose-phoshate binding barrel"/>
    <property type="match status" value="1"/>
</dbReference>
<comment type="function">
    <text evidence="1">IGPS catalyzes the conversion of PRFAR and glutamine to IGP, AICAR and glutamate. The HisF subunit catalyzes the cyclization activity that produces IGP and AICAR from PRFAR using the ammonia provided by the HisH subunit.</text>
</comment>
<comment type="catalytic activity">
    <reaction evidence="1">
        <text>5-[(5-phospho-1-deoxy-D-ribulos-1-ylimino)methylamino]-1-(5-phospho-beta-D-ribosyl)imidazole-4-carboxamide + L-glutamine = D-erythro-1-(imidazol-4-yl)glycerol 3-phosphate + 5-amino-1-(5-phospho-beta-D-ribosyl)imidazole-4-carboxamide + L-glutamate + H(+)</text>
        <dbReference type="Rhea" id="RHEA:24793"/>
        <dbReference type="ChEBI" id="CHEBI:15378"/>
        <dbReference type="ChEBI" id="CHEBI:29985"/>
        <dbReference type="ChEBI" id="CHEBI:58278"/>
        <dbReference type="ChEBI" id="CHEBI:58359"/>
        <dbReference type="ChEBI" id="CHEBI:58475"/>
        <dbReference type="ChEBI" id="CHEBI:58525"/>
        <dbReference type="EC" id="4.3.2.10"/>
    </reaction>
</comment>
<comment type="pathway">
    <text evidence="1">Amino-acid biosynthesis; L-histidine biosynthesis; L-histidine from 5-phospho-alpha-D-ribose 1-diphosphate: step 5/9.</text>
</comment>
<comment type="subunit">
    <text evidence="1">Heterodimer of HisH and HisF.</text>
</comment>
<comment type="subcellular location">
    <subcellularLocation>
        <location evidence="1">Cytoplasm</location>
    </subcellularLocation>
</comment>
<comment type="similarity">
    <text evidence="1">Belongs to the HisA/HisF family.</text>
</comment>
<sequence>MIKKRIIPCLDVKDGRVVKGIQFKGLRDIGNPVDFALYYNEQGADELVFLDISRTEAGHDLVLDVISETAEKLFIPLTVGGGISTIDDISQLLNHGADKVSLNSSALKNPSFIKEASEKFGRQCICIAIDSNYDSELNDYFCYTHGGKQRTDKRVYDWVQEVEALGAGELLITSMTHDGMKQGFDVSHLHEIEKLVNIPVIASGGGGNPEHFVDLFKETNVSAGLAASILHDKETTVNQIKSSMKRGGIPVR</sequence>
<gene>
    <name evidence="1" type="primary">hisF</name>
    <name type="ordered locus">SSP0424</name>
</gene>